<gene>
    <name type="ORF">CRE_01088</name>
</gene>
<comment type="function">
    <text evidence="1">Allows the formation of correctly charged Gln-tRNA(Gln) through the transamidation of misacylated Glu-tRNA(Gln) in the mitochondria. The reaction takes place in the presence of glutamine and ATP through an activated gamma-phospho-Glu-tRNA(Gln).</text>
</comment>
<comment type="catalytic activity">
    <reaction evidence="1">
        <text>L-glutamyl-tRNA(Gln) + L-glutamine + ATP + H2O = L-glutaminyl-tRNA(Gln) + L-glutamate + ADP + phosphate + H(+)</text>
        <dbReference type="Rhea" id="RHEA:17521"/>
        <dbReference type="Rhea" id="RHEA-COMP:9681"/>
        <dbReference type="Rhea" id="RHEA-COMP:9684"/>
        <dbReference type="ChEBI" id="CHEBI:15377"/>
        <dbReference type="ChEBI" id="CHEBI:15378"/>
        <dbReference type="ChEBI" id="CHEBI:29985"/>
        <dbReference type="ChEBI" id="CHEBI:30616"/>
        <dbReference type="ChEBI" id="CHEBI:43474"/>
        <dbReference type="ChEBI" id="CHEBI:58359"/>
        <dbReference type="ChEBI" id="CHEBI:78520"/>
        <dbReference type="ChEBI" id="CHEBI:78521"/>
        <dbReference type="ChEBI" id="CHEBI:456216"/>
    </reaction>
</comment>
<comment type="subunit">
    <text evidence="1">Subunit of the heterotrimeric GatCAB amidotransferase (AdT) complex, composed of A, B and C subunits.</text>
</comment>
<comment type="subcellular location">
    <subcellularLocation>
        <location evidence="1">Mitochondrion</location>
    </subcellularLocation>
</comment>
<comment type="miscellaneous">
    <text evidence="1">This protein may be expected to contain an N-terminal transit peptide but none has been predicted.</text>
</comment>
<comment type="similarity">
    <text evidence="1">Belongs to the GatC family.</text>
</comment>
<feature type="chain" id="PRO_0000413315" description="Glutamyl-tRNA(Gln) amidotransferase subunit C, mitochondrial">
    <location>
        <begin position="1"/>
        <end position="198"/>
    </location>
</feature>
<name>GATC_CAERE</name>
<organism>
    <name type="scientific">Caenorhabditis remanei</name>
    <name type="common">Caenorhabditis vulgaris</name>
    <dbReference type="NCBI Taxonomy" id="31234"/>
    <lineage>
        <taxon>Eukaryota</taxon>
        <taxon>Metazoa</taxon>
        <taxon>Ecdysozoa</taxon>
        <taxon>Nematoda</taxon>
        <taxon>Chromadorea</taxon>
        <taxon>Rhabditida</taxon>
        <taxon>Rhabditina</taxon>
        <taxon>Rhabditomorpha</taxon>
        <taxon>Rhabditoidea</taxon>
        <taxon>Rhabditidae</taxon>
        <taxon>Peloderinae</taxon>
        <taxon>Caenorhabditis</taxon>
    </lineage>
</organism>
<protein>
    <recommendedName>
        <fullName evidence="1">Glutamyl-tRNA(Gln) amidotransferase subunit C, mitochondrial</fullName>
        <shortName evidence="1">Glu-AdT subunit C</shortName>
        <ecNumber evidence="1">6.3.5.-</ecNumber>
    </recommendedName>
</protein>
<proteinExistence type="inferred from homology"/>
<sequence length="198" mass="22823">MNRFFKIVLTSTRRASTNGSGKRKTPFEGDKVHIPDEPYNSKVRFFICFKKKLKHGIQIDESLLSEMPPIDAKLISHLERLSLVRFDSEQAVANLRNSIRMAKRLELVDVEDVEPMHTVWESQECPTFDDVEEEPLPIDKVFRNAAVRFDDFFVTPPGNVPLESNERFDLNVINKWDTIGKPVAPEAKTIRLAEGRRK</sequence>
<evidence type="ECO:0000255" key="1">
    <source>
        <dbReference type="HAMAP-Rule" id="MF_03149"/>
    </source>
</evidence>
<reference key="1">
    <citation type="submission" date="2007-07" db="EMBL/GenBank/DDBJ databases">
        <title>PCAP assembly of the Caenorhabditis remanei genome.</title>
        <authorList>
            <consortium name="Caenorhabditis remanei Sequencing Consortium"/>
            <person name="Wilson R.K."/>
        </authorList>
    </citation>
    <scope>NUCLEOTIDE SEQUENCE [LARGE SCALE GENOMIC DNA]</scope>
    <source>
        <strain>PB4641</strain>
    </source>
</reference>
<keyword id="KW-0067">ATP-binding</keyword>
<keyword id="KW-0436">Ligase</keyword>
<keyword id="KW-0496">Mitochondrion</keyword>
<keyword id="KW-0547">Nucleotide-binding</keyword>
<keyword id="KW-0648">Protein biosynthesis</keyword>
<keyword id="KW-1185">Reference proteome</keyword>
<accession>E3MIE2</accession>
<dbReference type="EC" id="6.3.5.-" evidence="1"/>
<dbReference type="EMBL" id="DS268447">
    <property type="protein sequence ID" value="EFP02374.1"/>
    <property type="molecule type" value="Genomic_DNA"/>
</dbReference>
<dbReference type="RefSeq" id="XP_003104113.1">
    <property type="nucleotide sequence ID" value="XM_003104065.1"/>
</dbReference>
<dbReference type="STRING" id="31234.E3MIE2"/>
<dbReference type="EnsemblMetazoa" id="CRE01088.1">
    <property type="protein sequence ID" value="CRE01088.1"/>
    <property type="gene ID" value="WBGene00063055"/>
</dbReference>
<dbReference type="eggNOG" id="KOG4247">
    <property type="taxonomic scope" value="Eukaryota"/>
</dbReference>
<dbReference type="HOGENOM" id="CLU_105899_0_0_1"/>
<dbReference type="OMA" id="HIPDEPY"/>
<dbReference type="OrthoDB" id="5394539at2759"/>
<dbReference type="Proteomes" id="UP000008281">
    <property type="component" value="Unassembled WGS sequence"/>
</dbReference>
<dbReference type="GO" id="GO:0030956">
    <property type="term" value="C:glutamyl-tRNA(Gln) amidotransferase complex"/>
    <property type="evidence" value="ECO:0007669"/>
    <property type="project" value="UniProtKB-UniRule"/>
</dbReference>
<dbReference type="GO" id="GO:0005739">
    <property type="term" value="C:mitochondrion"/>
    <property type="evidence" value="ECO:0007669"/>
    <property type="project" value="UniProtKB-SubCell"/>
</dbReference>
<dbReference type="GO" id="GO:0005524">
    <property type="term" value="F:ATP binding"/>
    <property type="evidence" value="ECO:0007669"/>
    <property type="project" value="UniProtKB-KW"/>
</dbReference>
<dbReference type="GO" id="GO:0050567">
    <property type="term" value="F:glutaminyl-tRNA synthase (glutamine-hydrolyzing) activity"/>
    <property type="evidence" value="ECO:0007669"/>
    <property type="project" value="UniProtKB-UniRule"/>
</dbReference>
<dbReference type="GO" id="GO:0070681">
    <property type="term" value="P:glutaminyl-tRNAGln biosynthesis via transamidation"/>
    <property type="evidence" value="ECO:0007669"/>
    <property type="project" value="UniProtKB-UniRule"/>
</dbReference>
<dbReference type="GO" id="GO:0032543">
    <property type="term" value="P:mitochondrial translation"/>
    <property type="evidence" value="ECO:0007669"/>
    <property type="project" value="UniProtKB-UniRule"/>
</dbReference>
<dbReference type="GO" id="GO:0006450">
    <property type="term" value="P:regulation of translational fidelity"/>
    <property type="evidence" value="ECO:0007669"/>
    <property type="project" value="InterPro"/>
</dbReference>
<dbReference type="HAMAP" id="MF_00122">
    <property type="entry name" value="GatC"/>
    <property type="match status" value="1"/>
</dbReference>
<dbReference type="InterPro" id="IPR036113">
    <property type="entry name" value="Asp/Glu-ADT_sf_sub_c"/>
</dbReference>
<dbReference type="InterPro" id="IPR003837">
    <property type="entry name" value="GatC"/>
</dbReference>
<dbReference type="PANTHER" id="PTHR15004">
    <property type="entry name" value="GLUTAMYL-TRNA(GLN) AMIDOTRANSFERASE SUBUNIT C, MITOCHONDRIAL"/>
    <property type="match status" value="1"/>
</dbReference>
<dbReference type="PANTHER" id="PTHR15004:SF0">
    <property type="entry name" value="GLUTAMYL-TRNA(GLN) AMIDOTRANSFERASE SUBUNIT C, MITOCHONDRIAL"/>
    <property type="match status" value="1"/>
</dbReference>
<dbReference type="Pfam" id="PF02686">
    <property type="entry name" value="GatC"/>
    <property type="match status" value="1"/>
</dbReference>
<dbReference type="SUPFAM" id="SSF141000">
    <property type="entry name" value="Glu-tRNAGln amidotransferase C subunit"/>
    <property type="match status" value="1"/>
</dbReference>